<keyword id="KW-0687">Ribonucleoprotein</keyword>
<keyword id="KW-0689">Ribosomal protein</keyword>
<keyword id="KW-0694">RNA-binding</keyword>
<keyword id="KW-0699">rRNA-binding</keyword>
<organism>
    <name type="scientific">Corynebacterium glutamicum (strain R)</name>
    <dbReference type="NCBI Taxonomy" id="340322"/>
    <lineage>
        <taxon>Bacteria</taxon>
        <taxon>Bacillati</taxon>
        <taxon>Actinomycetota</taxon>
        <taxon>Actinomycetes</taxon>
        <taxon>Mycobacteriales</taxon>
        <taxon>Corynebacteriaceae</taxon>
        <taxon>Corynebacterium</taxon>
    </lineage>
</organism>
<dbReference type="EMBL" id="AP009044">
    <property type="protein sequence ID" value="BAF53591.1"/>
    <property type="molecule type" value="Genomic_DNA"/>
</dbReference>
<dbReference type="RefSeq" id="WP_003854312.1">
    <property type="nucleotide sequence ID" value="NC_009342.1"/>
</dbReference>
<dbReference type="SMR" id="A4QBJ4"/>
<dbReference type="GeneID" id="1021522"/>
<dbReference type="KEGG" id="cgt:cgR_0620"/>
<dbReference type="HOGENOM" id="CLU_095071_2_1_11"/>
<dbReference type="PhylomeDB" id="A4QBJ4"/>
<dbReference type="Proteomes" id="UP000006698">
    <property type="component" value="Chromosome"/>
</dbReference>
<dbReference type="GO" id="GO:0022625">
    <property type="term" value="C:cytosolic large ribosomal subunit"/>
    <property type="evidence" value="ECO:0007669"/>
    <property type="project" value="TreeGrafter"/>
</dbReference>
<dbReference type="GO" id="GO:0070180">
    <property type="term" value="F:large ribosomal subunit rRNA binding"/>
    <property type="evidence" value="ECO:0007669"/>
    <property type="project" value="TreeGrafter"/>
</dbReference>
<dbReference type="GO" id="GO:0003735">
    <property type="term" value="F:structural constituent of ribosome"/>
    <property type="evidence" value="ECO:0007669"/>
    <property type="project" value="InterPro"/>
</dbReference>
<dbReference type="GO" id="GO:0006412">
    <property type="term" value="P:translation"/>
    <property type="evidence" value="ECO:0007669"/>
    <property type="project" value="UniProtKB-UniRule"/>
</dbReference>
<dbReference type="CDD" id="cd00337">
    <property type="entry name" value="Ribosomal_uL14"/>
    <property type="match status" value="1"/>
</dbReference>
<dbReference type="FunFam" id="2.40.150.20:FF:000001">
    <property type="entry name" value="50S ribosomal protein L14"/>
    <property type="match status" value="1"/>
</dbReference>
<dbReference type="Gene3D" id="2.40.150.20">
    <property type="entry name" value="Ribosomal protein L14"/>
    <property type="match status" value="1"/>
</dbReference>
<dbReference type="HAMAP" id="MF_01367">
    <property type="entry name" value="Ribosomal_uL14"/>
    <property type="match status" value="1"/>
</dbReference>
<dbReference type="InterPro" id="IPR000218">
    <property type="entry name" value="Ribosomal_uL14"/>
</dbReference>
<dbReference type="InterPro" id="IPR005745">
    <property type="entry name" value="Ribosomal_uL14_bac-type"/>
</dbReference>
<dbReference type="InterPro" id="IPR019972">
    <property type="entry name" value="Ribosomal_uL14_CS"/>
</dbReference>
<dbReference type="InterPro" id="IPR036853">
    <property type="entry name" value="Ribosomal_uL14_sf"/>
</dbReference>
<dbReference type="NCBIfam" id="TIGR01067">
    <property type="entry name" value="rplN_bact"/>
    <property type="match status" value="1"/>
</dbReference>
<dbReference type="PANTHER" id="PTHR11761">
    <property type="entry name" value="50S/60S RIBOSOMAL PROTEIN L14/L23"/>
    <property type="match status" value="1"/>
</dbReference>
<dbReference type="PANTHER" id="PTHR11761:SF3">
    <property type="entry name" value="LARGE RIBOSOMAL SUBUNIT PROTEIN UL14M"/>
    <property type="match status" value="1"/>
</dbReference>
<dbReference type="Pfam" id="PF00238">
    <property type="entry name" value="Ribosomal_L14"/>
    <property type="match status" value="1"/>
</dbReference>
<dbReference type="SMART" id="SM01374">
    <property type="entry name" value="Ribosomal_L14"/>
    <property type="match status" value="1"/>
</dbReference>
<dbReference type="SUPFAM" id="SSF50193">
    <property type="entry name" value="Ribosomal protein L14"/>
    <property type="match status" value="1"/>
</dbReference>
<dbReference type="PROSITE" id="PS00049">
    <property type="entry name" value="RIBOSOMAL_L14"/>
    <property type="match status" value="1"/>
</dbReference>
<reference key="1">
    <citation type="journal article" date="2007" name="Microbiology">
        <title>Comparative analysis of the Corynebacterium glutamicum group and complete genome sequence of strain R.</title>
        <authorList>
            <person name="Yukawa H."/>
            <person name="Omumasaba C.A."/>
            <person name="Nonaka H."/>
            <person name="Kos P."/>
            <person name="Okai N."/>
            <person name="Suzuki N."/>
            <person name="Suda M."/>
            <person name="Tsuge Y."/>
            <person name="Watanabe J."/>
            <person name="Ikeda Y."/>
            <person name="Vertes A.A."/>
            <person name="Inui M."/>
        </authorList>
    </citation>
    <scope>NUCLEOTIDE SEQUENCE [LARGE SCALE GENOMIC DNA]</scope>
    <source>
        <strain>R</strain>
    </source>
</reference>
<comment type="function">
    <text evidence="1">Binds to 23S rRNA. Forms part of two intersubunit bridges in the 70S ribosome.</text>
</comment>
<comment type="subunit">
    <text evidence="1">Part of the 50S ribosomal subunit. Forms a cluster with proteins L3 and L19. In the 70S ribosome, L14 and L19 interact and together make contacts with the 16S rRNA in bridges B5 and B8.</text>
</comment>
<comment type="similarity">
    <text evidence="1">Belongs to the universal ribosomal protein uL14 family.</text>
</comment>
<evidence type="ECO:0000255" key="1">
    <source>
        <dbReference type="HAMAP-Rule" id="MF_01367"/>
    </source>
</evidence>
<evidence type="ECO:0000305" key="2"/>
<gene>
    <name evidence="1" type="primary">rplN</name>
    <name type="ordered locus">cgR_0620</name>
</gene>
<proteinExistence type="inferred from homology"/>
<name>RL14_CORGB</name>
<feature type="chain" id="PRO_1000055568" description="Large ribosomal subunit protein uL14">
    <location>
        <begin position="1"/>
        <end position="122"/>
    </location>
</feature>
<sequence>MIQQESRLKVADNTGAREILCIRVLGGSTRRFAGIGDVIVATVKEATPGGNVKSGEIVKAVIVRTKKETRRADGSYISFDENAAVIIKNDNEPRGTRIFGPVARELREKKFMKIVSLAPEVI</sequence>
<protein>
    <recommendedName>
        <fullName evidence="1">Large ribosomal subunit protein uL14</fullName>
    </recommendedName>
    <alternativeName>
        <fullName evidence="2">50S ribosomal protein L14</fullName>
    </alternativeName>
</protein>
<accession>A4QBJ4</accession>